<protein>
    <recommendedName>
        <fullName>Replicative helicase loader DnaC</fullName>
        <ecNumber evidence="1">3.6.4.-</ecNumber>
    </recommendedName>
    <alternativeName>
        <fullName>DNA replication protein DnaC</fullName>
    </alternativeName>
</protein>
<feature type="chain" id="PRO_0000079957" description="Replicative helicase loader DnaC">
    <location>
        <begin position="1"/>
        <end position="245"/>
    </location>
</feature>
<feature type="site" description="Probably involved in the interaction with the DnaB protein" evidence="1">
    <location>
        <position position="69"/>
    </location>
</feature>
<organism>
    <name type="scientific">Shigella flexneri</name>
    <dbReference type="NCBI Taxonomy" id="623"/>
    <lineage>
        <taxon>Bacteria</taxon>
        <taxon>Pseudomonadati</taxon>
        <taxon>Pseudomonadota</taxon>
        <taxon>Gammaproteobacteria</taxon>
        <taxon>Enterobacterales</taxon>
        <taxon>Enterobacteriaceae</taxon>
        <taxon>Shigella</taxon>
    </lineage>
</organism>
<reference key="1">
    <citation type="journal article" date="2002" name="Nucleic Acids Res.">
        <title>Genome sequence of Shigella flexneri 2a: insights into pathogenicity through comparison with genomes of Escherichia coli K12 and O157.</title>
        <authorList>
            <person name="Jin Q."/>
            <person name="Yuan Z."/>
            <person name="Xu J."/>
            <person name="Wang Y."/>
            <person name="Shen Y."/>
            <person name="Lu W."/>
            <person name="Wang J."/>
            <person name="Liu H."/>
            <person name="Yang J."/>
            <person name="Yang F."/>
            <person name="Zhang X."/>
            <person name="Zhang J."/>
            <person name="Yang G."/>
            <person name="Wu H."/>
            <person name="Qu D."/>
            <person name="Dong J."/>
            <person name="Sun L."/>
            <person name="Xue Y."/>
            <person name="Zhao A."/>
            <person name="Gao Y."/>
            <person name="Zhu J."/>
            <person name="Kan B."/>
            <person name="Ding K."/>
            <person name="Chen S."/>
            <person name="Cheng H."/>
            <person name="Yao Z."/>
            <person name="He B."/>
            <person name="Chen R."/>
            <person name="Ma D."/>
            <person name="Qiang B."/>
            <person name="Wen Y."/>
            <person name="Hou Y."/>
            <person name="Yu J."/>
        </authorList>
    </citation>
    <scope>NUCLEOTIDE SEQUENCE [LARGE SCALE GENOMIC DNA]</scope>
    <source>
        <strain>301 / Serotype 2a</strain>
    </source>
</reference>
<reference key="2">
    <citation type="journal article" date="2003" name="Infect. Immun.">
        <title>Complete genome sequence and comparative genomics of Shigella flexneri serotype 2a strain 2457T.</title>
        <authorList>
            <person name="Wei J."/>
            <person name="Goldberg M.B."/>
            <person name="Burland V."/>
            <person name="Venkatesan M.M."/>
            <person name="Deng W."/>
            <person name="Fournier G."/>
            <person name="Mayhew G.F."/>
            <person name="Plunkett G. III"/>
            <person name="Rose D.J."/>
            <person name="Darling A."/>
            <person name="Mau B."/>
            <person name="Perna N.T."/>
            <person name="Payne S.M."/>
            <person name="Runyen-Janecky L.J."/>
            <person name="Zhou S."/>
            <person name="Schwartz D.C."/>
            <person name="Blattner F.R."/>
        </authorList>
    </citation>
    <scope>NUCLEOTIDE SEQUENCE [LARGE SCALE GENOMIC DNA]</scope>
    <source>
        <strain>ATCC 700930 / 2457T / Serotype 2a</strain>
    </source>
</reference>
<keyword id="KW-0067">ATP-binding</keyword>
<keyword id="KW-0235">DNA replication</keyword>
<keyword id="KW-0238">DNA-binding</keyword>
<keyword id="KW-0378">Hydrolase</keyword>
<keyword id="KW-0547">Nucleotide-binding</keyword>
<keyword id="KW-0639">Primosome</keyword>
<keyword id="KW-1185">Reference proteome</keyword>
<accession>P0AEF3</accession>
<accession>P07905</accession>
<sequence>MKNVGDLMQRLQKMMPAHIKPAFKTGEELLAWQKEQGAIRSAALERENRAMKMQRTFNRSGIRPLHQNCSFENYRVECEGQMNALSKARQYVEEFDGNIASFIFSGKPGTGKNHLAAAICNELLLRGKSVLIITVADIMSAMKDTFRNSGTSEEQLLNDLSNVDLLVIDEIGVQTESKYEKVIINQIVDRRSSSKRPTGMLTNSNMEEMTKLLGERVMDRMRLGNSLWVIFNWDSYRSRVTGKEY</sequence>
<proteinExistence type="inferred from homology"/>
<evidence type="ECO:0000250" key="1">
    <source>
        <dbReference type="UniProtKB" id="P0AEF0"/>
    </source>
</evidence>
<evidence type="ECO:0000305" key="2"/>
<name>DNAC_SHIFL</name>
<comment type="function">
    <text evidence="1">Required to load the replicative helix DnaB onto single-stranded (ss)DNA, to initiate chromosomal replication. DnaC alters the inter-domain and inter-subunit interactions of DnaB, inducing an open ring conformation that allows ssDNA to access the interior of the DnaB(6):DnaC(6) ring. Has ATPase activity only in the presence of DnaB and ssDNA. ssDNA binds to the central pore in the DnaB(6):DnaC(6) complex, making contacts with both subunits. It forms, in concert with DnaB protein and other prepriming proteins DnaT, N, N', N'' a prepriming protein complex on the specific site of the template DNA recognized by protein N' (By similarity).</text>
</comment>
<comment type="catalytic activity">
    <reaction evidence="1">
        <text>ATP + H2O = ADP + phosphate + H(+)</text>
        <dbReference type="Rhea" id="RHEA:13065"/>
        <dbReference type="ChEBI" id="CHEBI:15377"/>
        <dbReference type="ChEBI" id="CHEBI:15378"/>
        <dbReference type="ChEBI" id="CHEBI:30616"/>
        <dbReference type="ChEBI" id="CHEBI:43474"/>
        <dbReference type="ChEBI" id="CHEBI:456216"/>
    </reaction>
    <physiologicalReaction direction="left-to-right" evidence="1">
        <dbReference type="Rhea" id="RHEA:13066"/>
    </physiologicalReaction>
</comment>
<comment type="subunit">
    <text evidence="1">The helix loader is a DnaB(6):DnaC(6) complex with a crack opening large enough to allow ssDNA into the central cavity.</text>
</comment>
<comment type="similarity">
    <text evidence="2">Belongs to the DnaC family.</text>
</comment>
<dbReference type="EC" id="3.6.4.-" evidence="1"/>
<dbReference type="EMBL" id="AE005674">
    <property type="protein sequence ID" value="AAN45807.1"/>
    <property type="molecule type" value="Genomic_DNA"/>
</dbReference>
<dbReference type="EMBL" id="AE014073">
    <property type="protein sequence ID" value="AAP19585.1"/>
    <property type="molecule type" value="Genomic_DNA"/>
</dbReference>
<dbReference type="RefSeq" id="NP_710100.1">
    <property type="nucleotide sequence ID" value="NC_004337.2"/>
</dbReference>
<dbReference type="RefSeq" id="WP_000799911.1">
    <property type="nucleotide sequence ID" value="NZ_WPGW01000045.1"/>
</dbReference>
<dbReference type="SMR" id="P0AEF3"/>
<dbReference type="STRING" id="198214.SF4392"/>
<dbReference type="PaxDb" id="198214-SF4392"/>
<dbReference type="GeneID" id="1026688"/>
<dbReference type="GeneID" id="93777487"/>
<dbReference type="KEGG" id="sfl:SF4392"/>
<dbReference type="KEGG" id="sfx:S4662"/>
<dbReference type="PATRIC" id="fig|198214.7.peg.5178"/>
<dbReference type="HOGENOM" id="CLU_062999_3_1_6"/>
<dbReference type="Proteomes" id="UP000001006">
    <property type="component" value="Chromosome"/>
</dbReference>
<dbReference type="Proteomes" id="UP000002673">
    <property type="component" value="Chromosome"/>
</dbReference>
<dbReference type="GO" id="GO:1990077">
    <property type="term" value="C:primosome complex"/>
    <property type="evidence" value="ECO:0007669"/>
    <property type="project" value="UniProtKB-KW"/>
</dbReference>
<dbReference type="GO" id="GO:0005524">
    <property type="term" value="F:ATP binding"/>
    <property type="evidence" value="ECO:0007669"/>
    <property type="project" value="UniProtKB-KW"/>
</dbReference>
<dbReference type="GO" id="GO:0016887">
    <property type="term" value="F:ATP hydrolysis activity"/>
    <property type="evidence" value="ECO:0007669"/>
    <property type="project" value="InterPro"/>
</dbReference>
<dbReference type="GO" id="GO:0003677">
    <property type="term" value="F:DNA binding"/>
    <property type="evidence" value="ECO:0007669"/>
    <property type="project" value="UniProtKB-KW"/>
</dbReference>
<dbReference type="GO" id="GO:0006269">
    <property type="term" value="P:DNA replication, synthesis of primer"/>
    <property type="evidence" value="ECO:0007669"/>
    <property type="project" value="UniProtKB-KW"/>
</dbReference>
<dbReference type="CDD" id="cd00009">
    <property type="entry name" value="AAA"/>
    <property type="match status" value="1"/>
</dbReference>
<dbReference type="FunFam" id="3.40.50.300:FF:000266">
    <property type="entry name" value="DNA replication protein DnaC"/>
    <property type="match status" value="1"/>
</dbReference>
<dbReference type="Gene3D" id="3.40.50.300">
    <property type="entry name" value="P-loop containing nucleotide triphosphate hydrolases"/>
    <property type="match status" value="1"/>
</dbReference>
<dbReference type="InterPro" id="IPR003593">
    <property type="entry name" value="AAA+_ATPase"/>
</dbReference>
<dbReference type="InterPro" id="IPR028350">
    <property type="entry name" value="DNAC/IstB-like"/>
</dbReference>
<dbReference type="InterPro" id="IPR002611">
    <property type="entry name" value="IstB_ATP-bd"/>
</dbReference>
<dbReference type="InterPro" id="IPR027417">
    <property type="entry name" value="P-loop_NTPase"/>
</dbReference>
<dbReference type="NCBIfam" id="NF005931">
    <property type="entry name" value="PRK07952.1"/>
    <property type="match status" value="1"/>
</dbReference>
<dbReference type="PANTHER" id="PTHR30050">
    <property type="entry name" value="CHROMOSOMAL REPLICATION INITIATOR PROTEIN DNAA"/>
    <property type="match status" value="1"/>
</dbReference>
<dbReference type="PANTHER" id="PTHR30050:SF9">
    <property type="entry name" value="DNA REPLICATION PROTEIN DNAC"/>
    <property type="match status" value="1"/>
</dbReference>
<dbReference type="Pfam" id="PF01695">
    <property type="entry name" value="IstB_IS21"/>
    <property type="match status" value="1"/>
</dbReference>
<dbReference type="PIRSF" id="PIRSF003073">
    <property type="entry name" value="DNAC_TnpB_IstB"/>
    <property type="match status" value="1"/>
</dbReference>
<dbReference type="SMART" id="SM00382">
    <property type="entry name" value="AAA"/>
    <property type="match status" value="1"/>
</dbReference>
<dbReference type="SUPFAM" id="SSF52540">
    <property type="entry name" value="P-loop containing nucleoside triphosphate hydrolases"/>
    <property type="match status" value="1"/>
</dbReference>
<gene>
    <name type="primary">dnaC</name>
    <name type="ordered locus">SF4392</name>
    <name type="ordered locus">S4662</name>
</gene>